<organism>
    <name type="scientific">Buchnera aphidicola subsp. Acyrthosiphon pisum (strain APS)</name>
    <name type="common">Acyrthosiphon pisum symbiotic bacterium</name>
    <dbReference type="NCBI Taxonomy" id="107806"/>
    <lineage>
        <taxon>Bacteria</taxon>
        <taxon>Pseudomonadati</taxon>
        <taxon>Pseudomonadota</taxon>
        <taxon>Gammaproteobacteria</taxon>
        <taxon>Enterobacterales</taxon>
        <taxon>Erwiniaceae</taxon>
        <taxon>Buchnera</taxon>
    </lineage>
</organism>
<accession>P57206</accession>
<feature type="chain" id="PRO_0000142132" description="Imidazole glycerol phosphate synthase subunit HisF">
    <location>
        <begin position="1"/>
        <end position="258"/>
    </location>
</feature>
<feature type="active site" evidence="2">
    <location>
        <position position="11"/>
    </location>
</feature>
<feature type="active site" evidence="2">
    <location>
        <position position="130"/>
    </location>
</feature>
<comment type="function">
    <text evidence="1">IGPS catalyzes the conversion of PRFAR and glutamine to IGP, AICAR and glutamate. The HisF subunit catalyzes the cyclization activity that produces IGP and AICAR from PRFAR using the ammonia provided by the HisH subunit (By similarity).</text>
</comment>
<comment type="catalytic activity">
    <reaction>
        <text>5-[(5-phospho-1-deoxy-D-ribulos-1-ylimino)methylamino]-1-(5-phospho-beta-D-ribosyl)imidazole-4-carboxamide + L-glutamine = D-erythro-1-(imidazol-4-yl)glycerol 3-phosphate + 5-amino-1-(5-phospho-beta-D-ribosyl)imidazole-4-carboxamide + L-glutamate + H(+)</text>
        <dbReference type="Rhea" id="RHEA:24793"/>
        <dbReference type="ChEBI" id="CHEBI:15378"/>
        <dbReference type="ChEBI" id="CHEBI:29985"/>
        <dbReference type="ChEBI" id="CHEBI:58278"/>
        <dbReference type="ChEBI" id="CHEBI:58359"/>
        <dbReference type="ChEBI" id="CHEBI:58475"/>
        <dbReference type="ChEBI" id="CHEBI:58525"/>
        <dbReference type="EC" id="4.3.2.10"/>
    </reaction>
</comment>
<comment type="pathway">
    <text>Amino-acid biosynthesis; L-histidine biosynthesis; L-histidine from 5-phospho-alpha-D-ribose 1-diphosphate: step 5/9.</text>
</comment>
<comment type="subunit">
    <text evidence="1">Heterodimer of HisH and HisF.</text>
</comment>
<comment type="subcellular location">
    <subcellularLocation>
        <location evidence="1">Cytoplasm</location>
    </subcellularLocation>
</comment>
<comment type="similarity">
    <text evidence="3">Belongs to the HisA/HisF family.</text>
</comment>
<reference key="1">
    <citation type="journal article" date="2000" name="Nature">
        <title>Genome sequence of the endocellular bacterial symbiont of aphids Buchnera sp. APS.</title>
        <authorList>
            <person name="Shigenobu S."/>
            <person name="Watanabe H."/>
            <person name="Hattori M."/>
            <person name="Sakaki Y."/>
            <person name="Ishikawa H."/>
        </authorList>
    </citation>
    <scope>NUCLEOTIDE SEQUENCE [LARGE SCALE GENOMIC DNA]</scope>
    <source>
        <strain>APS</strain>
    </source>
</reference>
<proteinExistence type="inferred from homology"/>
<keyword id="KW-0028">Amino-acid biosynthesis</keyword>
<keyword id="KW-0963">Cytoplasm</keyword>
<keyword id="KW-0368">Histidine biosynthesis</keyword>
<keyword id="KW-0456">Lyase</keyword>
<keyword id="KW-1185">Reference proteome</keyword>
<name>HIS6_BUCAI</name>
<protein>
    <recommendedName>
        <fullName>Imidazole glycerol phosphate synthase subunit HisF</fullName>
        <ecNumber>4.3.2.10</ecNumber>
    </recommendedName>
    <alternativeName>
        <fullName>IGP synthase cyclase subunit</fullName>
    </alternativeName>
    <alternativeName>
        <fullName>IGP synthase subunit HisF</fullName>
    </alternativeName>
    <alternativeName>
        <fullName>ImGP synthase subunit HisF</fullName>
        <shortName>IGPS subunit HisF</shortName>
    </alternativeName>
</protein>
<evidence type="ECO:0000250" key="1"/>
<evidence type="ECO:0000255" key="2"/>
<evidence type="ECO:0000305" key="3"/>
<dbReference type="EC" id="4.3.2.10"/>
<dbReference type="EMBL" id="BA000003">
    <property type="protein sequence ID" value="BAB12824.1"/>
    <property type="molecule type" value="Genomic_DNA"/>
</dbReference>
<dbReference type="RefSeq" id="NP_239938.1">
    <property type="nucleotide sequence ID" value="NC_002528.1"/>
</dbReference>
<dbReference type="RefSeq" id="WP_010895946.1">
    <property type="nucleotide sequence ID" value="NC_002528.1"/>
</dbReference>
<dbReference type="SMR" id="P57206"/>
<dbReference type="STRING" id="563178.BUAP5A_103"/>
<dbReference type="EnsemblBacteria" id="BAB12824">
    <property type="protein sequence ID" value="BAB12824"/>
    <property type="gene ID" value="BAB12824"/>
</dbReference>
<dbReference type="KEGG" id="buc:BU105"/>
<dbReference type="PATRIC" id="fig|107806.10.peg.113"/>
<dbReference type="eggNOG" id="COG0107">
    <property type="taxonomic scope" value="Bacteria"/>
</dbReference>
<dbReference type="HOGENOM" id="CLU_048577_4_0_6"/>
<dbReference type="UniPathway" id="UPA00031">
    <property type="reaction ID" value="UER00010"/>
</dbReference>
<dbReference type="Proteomes" id="UP000001806">
    <property type="component" value="Chromosome"/>
</dbReference>
<dbReference type="GO" id="GO:0005737">
    <property type="term" value="C:cytoplasm"/>
    <property type="evidence" value="ECO:0007669"/>
    <property type="project" value="UniProtKB-SubCell"/>
</dbReference>
<dbReference type="GO" id="GO:0000107">
    <property type="term" value="F:imidazoleglycerol-phosphate synthase activity"/>
    <property type="evidence" value="ECO:0007669"/>
    <property type="project" value="UniProtKB-UniRule"/>
</dbReference>
<dbReference type="GO" id="GO:0016829">
    <property type="term" value="F:lyase activity"/>
    <property type="evidence" value="ECO:0007669"/>
    <property type="project" value="UniProtKB-KW"/>
</dbReference>
<dbReference type="GO" id="GO:0000105">
    <property type="term" value="P:L-histidine biosynthetic process"/>
    <property type="evidence" value="ECO:0007669"/>
    <property type="project" value="UniProtKB-UniRule"/>
</dbReference>
<dbReference type="CDD" id="cd04731">
    <property type="entry name" value="HisF"/>
    <property type="match status" value="1"/>
</dbReference>
<dbReference type="FunFam" id="3.20.20.70:FF:000006">
    <property type="entry name" value="Imidazole glycerol phosphate synthase subunit HisF"/>
    <property type="match status" value="1"/>
</dbReference>
<dbReference type="Gene3D" id="3.20.20.70">
    <property type="entry name" value="Aldolase class I"/>
    <property type="match status" value="1"/>
</dbReference>
<dbReference type="HAMAP" id="MF_01013">
    <property type="entry name" value="HisF"/>
    <property type="match status" value="1"/>
</dbReference>
<dbReference type="InterPro" id="IPR013785">
    <property type="entry name" value="Aldolase_TIM"/>
</dbReference>
<dbReference type="InterPro" id="IPR006062">
    <property type="entry name" value="His_biosynth"/>
</dbReference>
<dbReference type="InterPro" id="IPR004651">
    <property type="entry name" value="HisF"/>
</dbReference>
<dbReference type="InterPro" id="IPR050064">
    <property type="entry name" value="IGPS_HisA/HisF"/>
</dbReference>
<dbReference type="InterPro" id="IPR011060">
    <property type="entry name" value="RibuloseP-bd_barrel"/>
</dbReference>
<dbReference type="NCBIfam" id="TIGR00735">
    <property type="entry name" value="hisF"/>
    <property type="match status" value="1"/>
</dbReference>
<dbReference type="PANTHER" id="PTHR21235:SF2">
    <property type="entry name" value="IMIDAZOLE GLYCEROL PHOSPHATE SYNTHASE HISHF"/>
    <property type="match status" value="1"/>
</dbReference>
<dbReference type="PANTHER" id="PTHR21235">
    <property type="entry name" value="IMIDAZOLE GLYCEROL PHOSPHATE SYNTHASE SUBUNIT HISF/H IGP SYNTHASE SUBUNIT HISF/H"/>
    <property type="match status" value="1"/>
</dbReference>
<dbReference type="Pfam" id="PF00977">
    <property type="entry name" value="His_biosynth"/>
    <property type="match status" value="1"/>
</dbReference>
<dbReference type="SUPFAM" id="SSF51366">
    <property type="entry name" value="Ribulose-phoshate binding barrel"/>
    <property type="match status" value="1"/>
</dbReference>
<gene>
    <name type="primary">hisF</name>
    <name type="ordered locus">BU105</name>
</gene>
<sequence length="258" mass="28621">MLAKRIIACLDVDDGVVVKGIKFQNHKIVGDIVPLARRYAKEGIDELVFYDITAATKNKLVDRSWIKNVSKVINIPFCVAGGIKSVEDAKKVLSSGADKISINSSALIDPNLITKISERFGVQCVVIGIDSWFDKTKNSYMVQQYTGDISKTYQTSWKTSDWVKKVQEKGAGEIVLNMMNKDGLQKGYDISHLSEIRKICKVPLIASGGAGSVEHFYEALYYSNVDGVLAASVFHKNIVEIKVLKKKLIARGMEIREC</sequence>